<dbReference type="EMBL" id="U94848">
    <property type="protein sequence ID" value="AAB96442.1"/>
    <property type="molecule type" value="Genomic_DNA"/>
</dbReference>
<dbReference type="EMBL" id="AY603355">
    <property type="protein sequence ID" value="AAT10471.1"/>
    <property type="molecule type" value="Genomic_DNA"/>
</dbReference>
<dbReference type="PIR" id="T37349">
    <property type="entry name" value="T37349"/>
</dbReference>
<dbReference type="SMR" id="O57195"/>
<dbReference type="Proteomes" id="UP000159908">
    <property type="component" value="Segment"/>
</dbReference>
<dbReference type="Proteomes" id="UP000172909">
    <property type="component" value="Segment"/>
</dbReference>
<dbReference type="GO" id="GO:0030430">
    <property type="term" value="C:host cell cytoplasm"/>
    <property type="evidence" value="ECO:0007669"/>
    <property type="project" value="UniProtKB-SubCell"/>
</dbReference>
<dbReference type="Gene3D" id="3.40.30.10">
    <property type="entry name" value="Glutaredoxin"/>
    <property type="match status" value="1"/>
</dbReference>
<dbReference type="InterPro" id="IPR008554">
    <property type="entry name" value="Glutaredoxin-like"/>
</dbReference>
<dbReference type="InterPro" id="IPR036249">
    <property type="entry name" value="Thioredoxin-like_sf"/>
</dbReference>
<dbReference type="Pfam" id="PF05768">
    <property type="entry name" value="Glrx-like"/>
    <property type="match status" value="1"/>
</dbReference>
<dbReference type="SUPFAM" id="SSF52833">
    <property type="entry name" value="Thioredoxin-like"/>
    <property type="match status" value="1"/>
</dbReference>
<organismHost>
    <name type="scientific">Homo sapiens</name>
    <name type="common">Human</name>
    <dbReference type="NCBI Taxonomy" id="9606"/>
</organismHost>
<sequence length="124" mass="14000">MKNVLIIFGKPYCSICENVSDAVEELKSEYDILHVDILSFFLKDGDSSMLGDVKRGTLIGNFAAHLSNYIVSIFKYNPQTKQMAFVDINKSLDFTKTDKSLVNLEILKSEIEKANYGVWPPVTE</sequence>
<feature type="chain" id="PRO_0000141626" description="Glutaredoxin-2">
    <location>
        <begin position="1"/>
        <end position="124"/>
    </location>
</feature>
<feature type="disulfide bond" description="Redox-active" evidence="1">
    <location>
        <begin position="13"/>
        <end position="16"/>
    </location>
</feature>
<accession>O57195</accession>
<keyword id="KW-1015">Disulfide bond</keyword>
<keyword id="KW-0249">Electron transport</keyword>
<keyword id="KW-1035">Host cytoplasm</keyword>
<keyword id="KW-0676">Redox-active center</keyword>
<keyword id="KW-0813">Transport</keyword>
<reference key="1">
    <citation type="journal article" date="1998" name="Virology">
        <title>The complete genomic sequence of the modified vaccinia Ankara strain: comparison with other orthopoxviruses.</title>
        <authorList>
            <person name="Antoine G."/>
            <person name="Scheiflinger F."/>
            <person name="Dorner F."/>
            <person name="Falkner F.G."/>
        </authorList>
    </citation>
    <scope>NUCLEOTIDE SEQUENCE [LARGE SCALE GENOMIC DNA]</scope>
</reference>
<reference key="2">
    <citation type="submission" date="2004-04" db="EMBL/GenBank/DDBJ databases">
        <authorList>
            <person name="Esposito J.J."/>
            <person name="Frace M."/>
            <person name="Sammons S.A."/>
            <person name="Olsen-Rasmussen M.S."/>
            <person name="Osborne J."/>
            <person name="Khristova M."/>
            <person name="Wohlhueter R.M."/>
        </authorList>
    </citation>
    <scope>NUCLEOTIDE SEQUENCE [LARGE SCALE GENOMIC DNA]</scope>
    <source>
        <strain>Isolate Acambis 3000</strain>
    </source>
</reference>
<comment type="function">
    <text evidence="1">Glutaredoxin necessary for virion morphogenesis and virus replication. Functions as a thiol-disulfide transfer protein between membrane-associated OPG128 and substrates OPG095 or OPG053. The complete pathway for formation of disulfide bonds in intracellular virion membrane proteins sequentially involves oxidation of OPG072, OPG128 and OPG088. Exhibit thioltransferase and dehydroascorbate reductase activities in vitro.</text>
</comment>
<comment type="subunit">
    <text evidence="1">Homodimer.</text>
</comment>
<comment type="subcellular location">
    <subcellularLocation>
        <location evidence="1">Host cytoplasm</location>
    </subcellularLocation>
</comment>
<comment type="induction">
    <text evidence="1">Expressed in the intermediate phase of the viral replicative cycle.</text>
</comment>
<comment type="similarity">
    <text evidence="2">Belongs to the glutaredoxin family.</text>
</comment>
<protein>
    <recommendedName>
        <fullName>Glutaredoxin-2</fullName>
    </recommendedName>
</protein>
<proteinExistence type="inferred from homology"/>
<organism>
    <name type="scientific">Vaccinia virus (strain Ankara)</name>
    <name type="common">VACV</name>
    <dbReference type="NCBI Taxonomy" id="126794"/>
    <lineage>
        <taxon>Viruses</taxon>
        <taxon>Varidnaviria</taxon>
        <taxon>Bamfordvirae</taxon>
        <taxon>Nucleocytoviricota</taxon>
        <taxon>Pokkesviricetes</taxon>
        <taxon>Chitovirales</taxon>
        <taxon>Poxviridae</taxon>
        <taxon>Chordopoxvirinae</taxon>
        <taxon>Orthopoxvirus</taxon>
        <taxon>Vaccinia virus</taxon>
    </lineage>
</organism>
<gene>
    <name type="primary">OPG088</name>
    <name type="ordered locus">MVA073L</name>
    <name type="ordered locus">ACAM3000_MVA_073</name>
</gene>
<name>GLRX2_VACCA</name>
<evidence type="ECO:0000250" key="1">
    <source>
        <dbReference type="UniProtKB" id="P68460"/>
    </source>
</evidence>
<evidence type="ECO:0000305" key="2"/>